<organism>
    <name type="scientific">Finegoldia magna (strain ATCC 29328 / DSM 20472 / WAL 2508)</name>
    <name type="common">Peptostreptococcus magnus</name>
    <dbReference type="NCBI Taxonomy" id="334413"/>
    <lineage>
        <taxon>Bacteria</taxon>
        <taxon>Bacillati</taxon>
        <taxon>Bacillota</taxon>
        <taxon>Tissierellia</taxon>
        <taxon>Tissierellales</taxon>
        <taxon>Peptoniphilaceae</taxon>
        <taxon>Finegoldia</taxon>
    </lineage>
</organism>
<reference key="1">
    <citation type="journal article" date="2008" name="DNA Res.">
        <title>Complete genome sequence of Finegoldia magna, an anaerobic opportunistic pathogen.</title>
        <authorList>
            <person name="Goto T."/>
            <person name="Yamashita A."/>
            <person name="Hirakawa H."/>
            <person name="Matsutani M."/>
            <person name="Todo K."/>
            <person name="Ohshima K."/>
            <person name="Toh H."/>
            <person name="Miyamoto K."/>
            <person name="Kuhara S."/>
            <person name="Hattori M."/>
            <person name="Shimizu T."/>
            <person name="Akimoto S."/>
        </authorList>
    </citation>
    <scope>NUCLEOTIDE SEQUENCE [LARGE SCALE GENOMIC DNA]</scope>
    <source>
        <strain>ATCC 29328 / DSM 20472 / WAL 2508</strain>
    </source>
</reference>
<name>KAD_FINM2</name>
<protein>
    <recommendedName>
        <fullName evidence="1">Adenylate kinase</fullName>
        <shortName evidence="1">AK</shortName>
        <ecNumber evidence="1">2.7.4.3</ecNumber>
    </recommendedName>
    <alternativeName>
        <fullName evidence="1">ATP-AMP transphosphorylase</fullName>
    </alternativeName>
    <alternativeName>
        <fullName evidence="1">ATP:AMP phosphotransferase</fullName>
    </alternativeName>
    <alternativeName>
        <fullName evidence="1">Adenylate monophosphate kinase</fullName>
    </alternativeName>
</protein>
<feature type="chain" id="PRO_1000100564" description="Adenylate kinase">
    <location>
        <begin position="1"/>
        <end position="215"/>
    </location>
</feature>
<feature type="region of interest" description="NMP" evidence="1">
    <location>
        <begin position="30"/>
        <end position="59"/>
    </location>
</feature>
<feature type="region of interest" description="LID" evidence="1">
    <location>
        <begin position="126"/>
        <end position="163"/>
    </location>
</feature>
<feature type="binding site" evidence="1">
    <location>
        <begin position="10"/>
        <end position="15"/>
    </location>
    <ligand>
        <name>ATP</name>
        <dbReference type="ChEBI" id="CHEBI:30616"/>
    </ligand>
</feature>
<feature type="binding site" evidence="1">
    <location>
        <position position="31"/>
    </location>
    <ligand>
        <name>AMP</name>
        <dbReference type="ChEBI" id="CHEBI:456215"/>
    </ligand>
</feature>
<feature type="binding site" evidence="1">
    <location>
        <position position="36"/>
    </location>
    <ligand>
        <name>AMP</name>
        <dbReference type="ChEBI" id="CHEBI:456215"/>
    </ligand>
</feature>
<feature type="binding site" evidence="1">
    <location>
        <begin position="57"/>
        <end position="59"/>
    </location>
    <ligand>
        <name>AMP</name>
        <dbReference type="ChEBI" id="CHEBI:456215"/>
    </ligand>
</feature>
<feature type="binding site" evidence="1">
    <location>
        <begin position="85"/>
        <end position="88"/>
    </location>
    <ligand>
        <name>AMP</name>
        <dbReference type="ChEBI" id="CHEBI:456215"/>
    </ligand>
</feature>
<feature type="binding site" evidence="1">
    <location>
        <position position="92"/>
    </location>
    <ligand>
        <name>AMP</name>
        <dbReference type="ChEBI" id="CHEBI:456215"/>
    </ligand>
</feature>
<feature type="binding site" evidence="1">
    <location>
        <position position="127"/>
    </location>
    <ligand>
        <name>ATP</name>
        <dbReference type="ChEBI" id="CHEBI:30616"/>
    </ligand>
</feature>
<feature type="binding site" evidence="1">
    <location>
        <position position="130"/>
    </location>
    <ligand>
        <name>Zn(2+)</name>
        <dbReference type="ChEBI" id="CHEBI:29105"/>
        <note>structural</note>
    </ligand>
</feature>
<feature type="binding site" evidence="1">
    <location>
        <position position="133"/>
    </location>
    <ligand>
        <name>Zn(2+)</name>
        <dbReference type="ChEBI" id="CHEBI:29105"/>
        <note>structural</note>
    </ligand>
</feature>
<feature type="binding site" evidence="1">
    <location>
        <begin position="136"/>
        <end position="137"/>
    </location>
    <ligand>
        <name>ATP</name>
        <dbReference type="ChEBI" id="CHEBI:30616"/>
    </ligand>
</feature>
<feature type="binding site" evidence="1">
    <location>
        <position position="150"/>
    </location>
    <ligand>
        <name>Zn(2+)</name>
        <dbReference type="ChEBI" id="CHEBI:29105"/>
        <note>structural</note>
    </ligand>
</feature>
<feature type="binding site" evidence="1">
    <location>
        <position position="153"/>
    </location>
    <ligand>
        <name>Zn(2+)</name>
        <dbReference type="ChEBI" id="CHEBI:29105"/>
        <note>structural</note>
    </ligand>
</feature>
<feature type="binding site" evidence="1">
    <location>
        <position position="160"/>
    </location>
    <ligand>
        <name>AMP</name>
        <dbReference type="ChEBI" id="CHEBI:456215"/>
    </ligand>
</feature>
<feature type="binding site" evidence="1">
    <location>
        <position position="171"/>
    </location>
    <ligand>
        <name>AMP</name>
        <dbReference type="ChEBI" id="CHEBI:456215"/>
    </ligand>
</feature>
<feature type="binding site" evidence="1">
    <location>
        <position position="199"/>
    </location>
    <ligand>
        <name>ATP</name>
        <dbReference type="ChEBI" id="CHEBI:30616"/>
    </ligand>
</feature>
<evidence type="ECO:0000255" key="1">
    <source>
        <dbReference type="HAMAP-Rule" id="MF_00235"/>
    </source>
</evidence>
<accession>B0RZT0</accession>
<keyword id="KW-0067">ATP-binding</keyword>
<keyword id="KW-0963">Cytoplasm</keyword>
<keyword id="KW-0418">Kinase</keyword>
<keyword id="KW-0479">Metal-binding</keyword>
<keyword id="KW-0545">Nucleotide biosynthesis</keyword>
<keyword id="KW-0547">Nucleotide-binding</keyword>
<keyword id="KW-1185">Reference proteome</keyword>
<keyword id="KW-0808">Transferase</keyword>
<keyword id="KW-0862">Zinc</keyword>
<dbReference type="EC" id="2.7.4.3" evidence="1"/>
<dbReference type="EMBL" id="AP008971">
    <property type="protein sequence ID" value="BAG07594.1"/>
    <property type="molecule type" value="Genomic_DNA"/>
</dbReference>
<dbReference type="RefSeq" id="WP_002840184.1">
    <property type="nucleotide sequence ID" value="NC_010376.1"/>
</dbReference>
<dbReference type="SMR" id="B0RZT0"/>
<dbReference type="STRING" id="334413.FMG_0176"/>
<dbReference type="KEGG" id="fma:FMG_0176"/>
<dbReference type="eggNOG" id="COG0563">
    <property type="taxonomic scope" value="Bacteria"/>
</dbReference>
<dbReference type="HOGENOM" id="CLU_032354_1_2_9"/>
<dbReference type="UniPathway" id="UPA00588">
    <property type="reaction ID" value="UER00649"/>
</dbReference>
<dbReference type="Proteomes" id="UP000001319">
    <property type="component" value="Chromosome"/>
</dbReference>
<dbReference type="GO" id="GO:0005737">
    <property type="term" value="C:cytoplasm"/>
    <property type="evidence" value="ECO:0007669"/>
    <property type="project" value="UniProtKB-SubCell"/>
</dbReference>
<dbReference type="GO" id="GO:0004017">
    <property type="term" value="F:adenylate kinase activity"/>
    <property type="evidence" value="ECO:0007669"/>
    <property type="project" value="UniProtKB-UniRule"/>
</dbReference>
<dbReference type="GO" id="GO:0005524">
    <property type="term" value="F:ATP binding"/>
    <property type="evidence" value="ECO:0007669"/>
    <property type="project" value="UniProtKB-UniRule"/>
</dbReference>
<dbReference type="GO" id="GO:0008270">
    <property type="term" value="F:zinc ion binding"/>
    <property type="evidence" value="ECO:0007669"/>
    <property type="project" value="UniProtKB-UniRule"/>
</dbReference>
<dbReference type="GO" id="GO:0044209">
    <property type="term" value="P:AMP salvage"/>
    <property type="evidence" value="ECO:0007669"/>
    <property type="project" value="UniProtKB-UniRule"/>
</dbReference>
<dbReference type="CDD" id="cd01428">
    <property type="entry name" value="ADK"/>
    <property type="match status" value="1"/>
</dbReference>
<dbReference type="FunFam" id="3.40.50.300:FF:000106">
    <property type="entry name" value="Adenylate kinase mitochondrial"/>
    <property type="match status" value="1"/>
</dbReference>
<dbReference type="Gene3D" id="3.40.50.300">
    <property type="entry name" value="P-loop containing nucleotide triphosphate hydrolases"/>
    <property type="match status" value="1"/>
</dbReference>
<dbReference type="HAMAP" id="MF_00235">
    <property type="entry name" value="Adenylate_kinase_Adk"/>
    <property type="match status" value="1"/>
</dbReference>
<dbReference type="InterPro" id="IPR006259">
    <property type="entry name" value="Adenyl_kin_sub"/>
</dbReference>
<dbReference type="InterPro" id="IPR000850">
    <property type="entry name" value="Adenylat/UMP-CMP_kin"/>
</dbReference>
<dbReference type="InterPro" id="IPR033690">
    <property type="entry name" value="Adenylat_kinase_CS"/>
</dbReference>
<dbReference type="InterPro" id="IPR007862">
    <property type="entry name" value="Adenylate_kinase_lid-dom"/>
</dbReference>
<dbReference type="InterPro" id="IPR027417">
    <property type="entry name" value="P-loop_NTPase"/>
</dbReference>
<dbReference type="NCBIfam" id="TIGR01351">
    <property type="entry name" value="adk"/>
    <property type="match status" value="1"/>
</dbReference>
<dbReference type="NCBIfam" id="NF001380">
    <property type="entry name" value="PRK00279.1-2"/>
    <property type="match status" value="1"/>
</dbReference>
<dbReference type="NCBIfam" id="NF001381">
    <property type="entry name" value="PRK00279.1-3"/>
    <property type="match status" value="1"/>
</dbReference>
<dbReference type="NCBIfam" id="NF011100">
    <property type="entry name" value="PRK14527.1"/>
    <property type="match status" value="1"/>
</dbReference>
<dbReference type="PANTHER" id="PTHR23359">
    <property type="entry name" value="NUCLEOTIDE KINASE"/>
    <property type="match status" value="1"/>
</dbReference>
<dbReference type="Pfam" id="PF00406">
    <property type="entry name" value="ADK"/>
    <property type="match status" value="1"/>
</dbReference>
<dbReference type="Pfam" id="PF05191">
    <property type="entry name" value="ADK_lid"/>
    <property type="match status" value="1"/>
</dbReference>
<dbReference type="PRINTS" id="PR00094">
    <property type="entry name" value="ADENYLTKNASE"/>
</dbReference>
<dbReference type="SUPFAM" id="SSF52540">
    <property type="entry name" value="P-loop containing nucleoside triphosphate hydrolases"/>
    <property type="match status" value="1"/>
</dbReference>
<dbReference type="PROSITE" id="PS00113">
    <property type="entry name" value="ADENYLATE_KINASE"/>
    <property type="match status" value="1"/>
</dbReference>
<proteinExistence type="inferred from homology"/>
<sequence>MRLILLGPPGAGKGTQAKRVIEEFDIPHISTGDIFRKNIKEKTELGQKVEGLLAQGKLVPDELTIEIVWDRLDQEDCKNGFLLDGFPRTIPQAEALDEGLAKRGLKLDRVLNIDVDKDSLVKRLSGRRVCPSCGASYHIDNNPTKVDGICDACQTPVIQREDDKEETVLDRIKVYDSQTKPLVDFYNKQDLVFTVDGTLPIDEITNKLVTELKKG</sequence>
<comment type="function">
    <text evidence="1">Catalyzes the reversible transfer of the terminal phosphate group between ATP and AMP. Plays an important role in cellular energy homeostasis and in adenine nucleotide metabolism.</text>
</comment>
<comment type="catalytic activity">
    <reaction evidence="1">
        <text>AMP + ATP = 2 ADP</text>
        <dbReference type="Rhea" id="RHEA:12973"/>
        <dbReference type="ChEBI" id="CHEBI:30616"/>
        <dbReference type="ChEBI" id="CHEBI:456215"/>
        <dbReference type="ChEBI" id="CHEBI:456216"/>
        <dbReference type="EC" id="2.7.4.3"/>
    </reaction>
</comment>
<comment type="pathway">
    <text evidence="1">Purine metabolism; AMP biosynthesis via salvage pathway; AMP from ADP: step 1/1.</text>
</comment>
<comment type="subunit">
    <text evidence="1">Monomer.</text>
</comment>
<comment type="subcellular location">
    <subcellularLocation>
        <location evidence="1">Cytoplasm</location>
    </subcellularLocation>
</comment>
<comment type="domain">
    <text evidence="1">Consists of three domains, a large central CORE domain and two small peripheral domains, NMPbind and LID, which undergo movements during catalysis. The LID domain closes over the site of phosphoryl transfer upon ATP binding. Assembling and dissambling the active center during each catalytic cycle provides an effective means to prevent ATP hydrolysis. Some bacteria have evolved a zinc-coordinating structure that stabilizes the LID domain.</text>
</comment>
<comment type="similarity">
    <text evidence="1">Belongs to the adenylate kinase family.</text>
</comment>
<gene>
    <name evidence="1" type="primary">adk</name>
    <name type="ordered locus">FMG_0176</name>
</gene>